<comment type="function">
    <text evidence="1">Involved in the de novo purine biosynthesis. Catalyzes the transfer of formate to 5-phospho-ribosyl-glycinamide (GAR), producing 5-phospho-ribosyl-N-formylglycinamide (FGAR). Formate is provided by PurU via hydrolysis of 10-formyl-tetrahydrofolate.</text>
</comment>
<comment type="catalytic activity">
    <reaction evidence="1">
        <text>N(1)-(5-phospho-beta-D-ribosyl)glycinamide + formate + ATP = N(2)-formyl-N(1)-(5-phospho-beta-D-ribosyl)glycinamide + ADP + phosphate + H(+)</text>
        <dbReference type="Rhea" id="RHEA:24829"/>
        <dbReference type="ChEBI" id="CHEBI:15378"/>
        <dbReference type="ChEBI" id="CHEBI:15740"/>
        <dbReference type="ChEBI" id="CHEBI:30616"/>
        <dbReference type="ChEBI" id="CHEBI:43474"/>
        <dbReference type="ChEBI" id="CHEBI:143788"/>
        <dbReference type="ChEBI" id="CHEBI:147286"/>
        <dbReference type="ChEBI" id="CHEBI:456216"/>
        <dbReference type="EC" id="6.3.1.21"/>
    </reaction>
    <physiologicalReaction direction="left-to-right" evidence="1">
        <dbReference type="Rhea" id="RHEA:24830"/>
    </physiologicalReaction>
</comment>
<comment type="pathway">
    <text evidence="1">Purine metabolism; IMP biosynthesis via de novo pathway; N(2)-formyl-N(1)-(5-phospho-D-ribosyl)glycinamide from N(1)-(5-phospho-D-ribosyl)glycinamide (formate route): step 1/1.</text>
</comment>
<comment type="subunit">
    <text evidence="1">Homodimer.</text>
</comment>
<comment type="similarity">
    <text evidence="1">Belongs to the PurK/PurT family.</text>
</comment>
<feature type="chain" id="PRO_0000319274" description="Formate-dependent phosphoribosylglycinamide formyltransferase">
    <location>
        <begin position="1"/>
        <end position="393"/>
    </location>
</feature>
<feature type="domain" description="ATP-grasp" evidence="1">
    <location>
        <begin position="119"/>
        <end position="308"/>
    </location>
</feature>
<feature type="binding site" evidence="1">
    <location>
        <begin position="22"/>
        <end position="23"/>
    </location>
    <ligand>
        <name>N(1)-(5-phospho-beta-D-ribosyl)glycinamide</name>
        <dbReference type="ChEBI" id="CHEBI:143788"/>
    </ligand>
</feature>
<feature type="binding site" evidence="1">
    <location>
        <position position="82"/>
    </location>
    <ligand>
        <name>N(1)-(5-phospho-beta-D-ribosyl)glycinamide</name>
        <dbReference type="ChEBI" id="CHEBI:143788"/>
    </ligand>
</feature>
<feature type="binding site" evidence="1">
    <location>
        <position position="114"/>
    </location>
    <ligand>
        <name>ATP</name>
        <dbReference type="ChEBI" id="CHEBI:30616"/>
    </ligand>
</feature>
<feature type="binding site" evidence="1">
    <location>
        <position position="155"/>
    </location>
    <ligand>
        <name>ATP</name>
        <dbReference type="ChEBI" id="CHEBI:30616"/>
    </ligand>
</feature>
<feature type="binding site" evidence="1">
    <location>
        <begin position="160"/>
        <end position="165"/>
    </location>
    <ligand>
        <name>ATP</name>
        <dbReference type="ChEBI" id="CHEBI:30616"/>
    </ligand>
</feature>
<feature type="binding site" evidence="1">
    <location>
        <begin position="195"/>
        <end position="198"/>
    </location>
    <ligand>
        <name>ATP</name>
        <dbReference type="ChEBI" id="CHEBI:30616"/>
    </ligand>
</feature>
<feature type="binding site" evidence="1">
    <location>
        <position position="203"/>
    </location>
    <ligand>
        <name>ATP</name>
        <dbReference type="ChEBI" id="CHEBI:30616"/>
    </ligand>
</feature>
<feature type="binding site" evidence="1">
    <location>
        <position position="267"/>
    </location>
    <ligand>
        <name>Mg(2+)</name>
        <dbReference type="ChEBI" id="CHEBI:18420"/>
    </ligand>
</feature>
<feature type="binding site" evidence="1">
    <location>
        <position position="279"/>
    </location>
    <ligand>
        <name>Mg(2+)</name>
        <dbReference type="ChEBI" id="CHEBI:18420"/>
    </ligand>
</feature>
<feature type="binding site" evidence="1">
    <location>
        <position position="286"/>
    </location>
    <ligand>
        <name>N(1)-(5-phospho-beta-D-ribosyl)glycinamide</name>
        <dbReference type="ChEBI" id="CHEBI:143788"/>
    </ligand>
</feature>
<feature type="binding site" evidence="1">
    <location>
        <position position="355"/>
    </location>
    <ligand>
        <name>N(1)-(5-phospho-beta-D-ribosyl)glycinamide</name>
        <dbReference type="ChEBI" id="CHEBI:143788"/>
    </ligand>
</feature>
<feature type="binding site" evidence="1">
    <location>
        <begin position="362"/>
        <end position="363"/>
    </location>
    <ligand>
        <name>N(1)-(5-phospho-beta-D-ribosyl)glycinamide</name>
        <dbReference type="ChEBI" id="CHEBI:143788"/>
    </ligand>
</feature>
<protein>
    <recommendedName>
        <fullName evidence="1">Formate-dependent phosphoribosylglycinamide formyltransferase</fullName>
        <ecNumber evidence="1">6.3.1.21</ecNumber>
    </recommendedName>
    <alternativeName>
        <fullName evidence="1">5'-phosphoribosylglycinamide transformylase 2</fullName>
    </alternativeName>
    <alternativeName>
        <fullName evidence="1">Formate-dependent GAR transformylase</fullName>
    </alternativeName>
    <alternativeName>
        <fullName evidence="1">GAR transformylase 2</fullName>
        <shortName evidence="1">GART 2</shortName>
    </alternativeName>
    <alternativeName>
        <fullName evidence="1">Non-folate glycinamide ribonucleotide transformylase</fullName>
    </alternativeName>
    <alternativeName>
        <fullName evidence="1">Phosphoribosylglycinamide formyltransferase 2</fullName>
    </alternativeName>
</protein>
<gene>
    <name evidence="1" type="primary">purT</name>
    <name type="ordered locus">YPDSF_1348</name>
</gene>
<name>PURT_YERPP</name>
<sequence>MLTIGTALRPGATRVMLLGAGELGKEVAIECQRLGLEVIAVDRYADAPAMHVAHRSHVINMLDGAALKQLVAQEKPHYIVPEIEAIATDMLVELEKMGQHVVPCAEATRLTMNREGIRRLAAETLQLPTSSYRFADTDSAFFQAVRDIGYPCIVKPVMSSSGKGQSLIRSEEHLQAAWEYAQQGGRAGSGRVIIEGLVHFDFEITLLTIRAVDGIHFCAPIGHRQEDGDYRESWQPQAMSDIALQRAKEISAQVVTALGGFGLFGVELFVCGDDVIFSEVSPRPHDTGMVTLISQNMSEFALHVRAFLGLPIGTIRQYGAAASAVILPELTSQNITYRGLETALIGDTQIRLFGKPEIAGKRRLGVALAVADNIETAIEVAKKAAGNIEVSGE</sequence>
<evidence type="ECO:0000255" key="1">
    <source>
        <dbReference type="HAMAP-Rule" id="MF_01643"/>
    </source>
</evidence>
<organism>
    <name type="scientific">Yersinia pestis (strain Pestoides F)</name>
    <dbReference type="NCBI Taxonomy" id="386656"/>
    <lineage>
        <taxon>Bacteria</taxon>
        <taxon>Pseudomonadati</taxon>
        <taxon>Pseudomonadota</taxon>
        <taxon>Gammaproteobacteria</taxon>
        <taxon>Enterobacterales</taxon>
        <taxon>Yersiniaceae</taxon>
        <taxon>Yersinia</taxon>
    </lineage>
</organism>
<reference key="1">
    <citation type="submission" date="2007-02" db="EMBL/GenBank/DDBJ databases">
        <title>Complete sequence of chromosome of Yersinia pestis Pestoides F.</title>
        <authorList>
            <consortium name="US DOE Joint Genome Institute"/>
            <person name="Copeland A."/>
            <person name="Lucas S."/>
            <person name="Lapidus A."/>
            <person name="Barry K."/>
            <person name="Detter J.C."/>
            <person name="Glavina del Rio T."/>
            <person name="Hammon N."/>
            <person name="Israni S."/>
            <person name="Dalin E."/>
            <person name="Tice H."/>
            <person name="Pitluck S."/>
            <person name="Di Bartolo G."/>
            <person name="Chain P."/>
            <person name="Malfatti S."/>
            <person name="Shin M."/>
            <person name="Vergez L."/>
            <person name="Schmutz J."/>
            <person name="Larimer F."/>
            <person name="Land M."/>
            <person name="Hauser L."/>
            <person name="Worsham P."/>
            <person name="Chu M."/>
            <person name="Bearden S."/>
            <person name="Garcia E."/>
            <person name="Richardson P."/>
        </authorList>
    </citation>
    <scope>NUCLEOTIDE SEQUENCE [LARGE SCALE GENOMIC DNA]</scope>
    <source>
        <strain>Pestoides F</strain>
    </source>
</reference>
<proteinExistence type="inferred from homology"/>
<dbReference type="EC" id="6.3.1.21" evidence="1"/>
<dbReference type="EMBL" id="CP000668">
    <property type="protein sequence ID" value="ABP39739.1"/>
    <property type="molecule type" value="Genomic_DNA"/>
</dbReference>
<dbReference type="RefSeq" id="WP_002211083.1">
    <property type="nucleotide sequence ID" value="NZ_CP009715.1"/>
</dbReference>
<dbReference type="SMR" id="A4TKC7"/>
<dbReference type="GeneID" id="57976805"/>
<dbReference type="KEGG" id="ypp:YPDSF_1348"/>
<dbReference type="PATRIC" id="fig|386656.14.peg.2450"/>
<dbReference type="UniPathway" id="UPA00074">
    <property type="reaction ID" value="UER00127"/>
</dbReference>
<dbReference type="GO" id="GO:0005829">
    <property type="term" value="C:cytosol"/>
    <property type="evidence" value="ECO:0007669"/>
    <property type="project" value="TreeGrafter"/>
</dbReference>
<dbReference type="GO" id="GO:0005524">
    <property type="term" value="F:ATP binding"/>
    <property type="evidence" value="ECO:0007669"/>
    <property type="project" value="UniProtKB-UniRule"/>
</dbReference>
<dbReference type="GO" id="GO:0000287">
    <property type="term" value="F:magnesium ion binding"/>
    <property type="evidence" value="ECO:0007669"/>
    <property type="project" value="InterPro"/>
</dbReference>
<dbReference type="GO" id="GO:0043815">
    <property type="term" value="F:phosphoribosylglycinamide formyltransferase 2 activity"/>
    <property type="evidence" value="ECO:0007669"/>
    <property type="project" value="UniProtKB-UniRule"/>
</dbReference>
<dbReference type="GO" id="GO:0004644">
    <property type="term" value="F:phosphoribosylglycinamide formyltransferase activity"/>
    <property type="evidence" value="ECO:0007669"/>
    <property type="project" value="InterPro"/>
</dbReference>
<dbReference type="GO" id="GO:0006189">
    <property type="term" value="P:'de novo' IMP biosynthetic process"/>
    <property type="evidence" value="ECO:0007669"/>
    <property type="project" value="UniProtKB-UniRule"/>
</dbReference>
<dbReference type="FunFam" id="3.30.1490.20:FF:000013">
    <property type="entry name" value="Formate-dependent phosphoribosylglycinamide formyltransferase"/>
    <property type="match status" value="1"/>
</dbReference>
<dbReference type="FunFam" id="3.30.470.20:FF:000027">
    <property type="entry name" value="Formate-dependent phosphoribosylglycinamide formyltransferase"/>
    <property type="match status" value="1"/>
</dbReference>
<dbReference type="FunFam" id="3.40.50.20:FF:000007">
    <property type="entry name" value="Formate-dependent phosphoribosylglycinamide formyltransferase"/>
    <property type="match status" value="1"/>
</dbReference>
<dbReference type="Gene3D" id="3.40.50.20">
    <property type="match status" value="1"/>
</dbReference>
<dbReference type="Gene3D" id="3.30.1490.20">
    <property type="entry name" value="ATP-grasp fold, A domain"/>
    <property type="match status" value="1"/>
</dbReference>
<dbReference type="Gene3D" id="3.30.470.20">
    <property type="entry name" value="ATP-grasp fold, B domain"/>
    <property type="match status" value="1"/>
</dbReference>
<dbReference type="HAMAP" id="MF_01643">
    <property type="entry name" value="PurT"/>
    <property type="match status" value="1"/>
</dbReference>
<dbReference type="InterPro" id="IPR011761">
    <property type="entry name" value="ATP-grasp"/>
</dbReference>
<dbReference type="InterPro" id="IPR003135">
    <property type="entry name" value="ATP-grasp_carboxylate-amine"/>
</dbReference>
<dbReference type="InterPro" id="IPR013815">
    <property type="entry name" value="ATP_grasp_subdomain_1"/>
</dbReference>
<dbReference type="InterPro" id="IPR016185">
    <property type="entry name" value="PreATP-grasp_dom_sf"/>
</dbReference>
<dbReference type="InterPro" id="IPR005862">
    <property type="entry name" value="PurT"/>
</dbReference>
<dbReference type="InterPro" id="IPR054350">
    <property type="entry name" value="PurT/PurK_preATP-grasp"/>
</dbReference>
<dbReference type="InterPro" id="IPR048740">
    <property type="entry name" value="PurT_C"/>
</dbReference>
<dbReference type="InterPro" id="IPR011054">
    <property type="entry name" value="Rudment_hybrid_motif"/>
</dbReference>
<dbReference type="NCBIfam" id="NF006766">
    <property type="entry name" value="PRK09288.1"/>
    <property type="match status" value="1"/>
</dbReference>
<dbReference type="NCBIfam" id="TIGR01142">
    <property type="entry name" value="purT"/>
    <property type="match status" value="1"/>
</dbReference>
<dbReference type="PANTHER" id="PTHR43055">
    <property type="entry name" value="FORMATE-DEPENDENT PHOSPHORIBOSYLGLYCINAMIDE FORMYLTRANSFERASE"/>
    <property type="match status" value="1"/>
</dbReference>
<dbReference type="PANTHER" id="PTHR43055:SF1">
    <property type="entry name" value="FORMATE-DEPENDENT PHOSPHORIBOSYLGLYCINAMIDE FORMYLTRANSFERASE"/>
    <property type="match status" value="1"/>
</dbReference>
<dbReference type="Pfam" id="PF02222">
    <property type="entry name" value="ATP-grasp"/>
    <property type="match status" value="1"/>
</dbReference>
<dbReference type="Pfam" id="PF21244">
    <property type="entry name" value="PurT_C"/>
    <property type="match status" value="1"/>
</dbReference>
<dbReference type="Pfam" id="PF22660">
    <property type="entry name" value="RS_preATP-grasp-like"/>
    <property type="match status" value="1"/>
</dbReference>
<dbReference type="SUPFAM" id="SSF56059">
    <property type="entry name" value="Glutathione synthetase ATP-binding domain-like"/>
    <property type="match status" value="1"/>
</dbReference>
<dbReference type="SUPFAM" id="SSF52440">
    <property type="entry name" value="PreATP-grasp domain"/>
    <property type="match status" value="1"/>
</dbReference>
<dbReference type="SUPFAM" id="SSF51246">
    <property type="entry name" value="Rudiment single hybrid motif"/>
    <property type="match status" value="1"/>
</dbReference>
<dbReference type="PROSITE" id="PS50975">
    <property type="entry name" value="ATP_GRASP"/>
    <property type="match status" value="1"/>
</dbReference>
<keyword id="KW-0067">ATP-binding</keyword>
<keyword id="KW-0436">Ligase</keyword>
<keyword id="KW-0460">Magnesium</keyword>
<keyword id="KW-0479">Metal-binding</keyword>
<keyword id="KW-0547">Nucleotide-binding</keyword>
<keyword id="KW-0658">Purine biosynthesis</keyword>
<accession>A4TKC7</accession>